<reference key="1">
    <citation type="journal article" date="1996" name="Plant Physiol.">
        <title>Fruit-specific expression of a defensin-type gene family in bell pepper. Upregulation during ripening and upon wounding.</title>
        <authorList>
            <person name="Meyer B."/>
            <person name="Houlne G."/>
            <person name="Pozueta-Romero J."/>
            <person name="Schantz M.L."/>
            <person name="Schantz R."/>
        </authorList>
    </citation>
    <scope>NUCLEOTIDE SEQUENCE [GENOMIC DNA]</scope>
    <scope>CHARACTERIZATION</scope>
    <source>
        <strain>cv. Yolo Wonder</strain>
        <tissue>Fruit</tissue>
    </source>
</reference>
<reference key="2">
    <citation type="journal article" date="1998" name="Mol. Gen. Genet.">
        <title>Alteration of the expression of a plant defensin gene by exon shuffling in bell pepper (Capsicum annuum L.).</title>
        <authorList>
            <person name="Houlne G."/>
            <person name="Meyer B."/>
            <person name="Schantz R."/>
        </authorList>
    </citation>
    <scope>NUCLEOTIDE SEQUENCE [GENOMIC DNA]</scope>
    <scope>CHARACTERIZATION</scope>
    <source>
        <strain>cv. Yolo Wonder</strain>
        <tissue>Fruit</tissue>
    </source>
</reference>
<protein>
    <recommendedName>
        <fullName>Defensin J1-2</fullName>
    </recommendedName>
</protein>
<name>DEF2_CAPAN</name>
<comment type="function">
    <text>Plant defense peptide with antifungal activity against F.oxysporum and B.cinerea.</text>
</comment>
<comment type="subunit">
    <text evidence="1">Monomer.</text>
</comment>
<comment type="subcellular location">
    <subcellularLocation>
        <location>Secreted</location>
    </subcellularLocation>
</comment>
<comment type="tissue specificity">
    <text>Expressed in flowers and in young fruits.</text>
</comment>
<comment type="developmental stage">
    <text>Accumulates during ripening.</text>
</comment>
<comment type="similarity">
    <text evidence="2">Belongs to the DEFL family.</text>
</comment>
<accession>O65740</accession>
<keyword id="KW-0929">Antimicrobial</keyword>
<keyword id="KW-1015">Disulfide bond</keyword>
<keyword id="KW-0295">Fungicide</keyword>
<keyword id="KW-0611">Plant defense</keyword>
<keyword id="KW-0964">Secreted</keyword>
<keyword id="KW-0732">Signal</keyword>
<evidence type="ECO:0000250" key="1"/>
<evidence type="ECO:0000305" key="2"/>
<feature type="signal peptide" evidence="1">
    <location>
        <begin position="1"/>
        <end position="27"/>
    </location>
</feature>
<feature type="chain" id="PRO_0000007037" description="Defensin J1-2">
    <location>
        <begin position="28"/>
        <end position="74"/>
    </location>
</feature>
<feature type="disulfide bond" evidence="1">
    <location>
        <begin position="30"/>
        <end position="74"/>
    </location>
</feature>
<feature type="disulfide bond" evidence="1">
    <location>
        <begin position="41"/>
        <end position="61"/>
    </location>
</feature>
<feature type="disulfide bond" evidence="1">
    <location>
        <begin position="47"/>
        <end position="68"/>
    </location>
</feature>
<feature type="disulfide bond" evidence="1">
    <location>
        <begin position="51"/>
        <end position="70"/>
    </location>
</feature>
<organism>
    <name type="scientific">Capsicum annuum</name>
    <name type="common">Capsicum pepper</name>
    <dbReference type="NCBI Taxonomy" id="4072"/>
    <lineage>
        <taxon>Eukaryota</taxon>
        <taxon>Viridiplantae</taxon>
        <taxon>Streptophyta</taxon>
        <taxon>Embryophyta</taxon>
        <taxon>Tracheophyta</taxon>
        <taxon>Spermatophyta</taxon>
        <taxon>Magnoliopsida</taxon>
        <taxon>eudicotyledons</taxon>
        <taxon>Gunneridae</taxon>
        <taxon>Pentapetalae</taxon>
        <taxon>asterids</taxon>
        <taxon>lamiids</taxon>
        <taxon>Solanales</taxon>
        <taxon>Solanaceae</taxon>
        <taxon>Solanoideae</taxon>
        <taxon>Capsiceae</taxon>
        <taxon>Capsicum</taxon>
    </lineage>
</organism>
<dbReference type="EMBL" id="X95730">
    <property type="protein sequence ID" value="CAA65046.1"/>
    <property type="molecule type" value="Genomic_DNA"/>
</dbReference>
<dbReference type="RefSeq" id="NP_001385265.1">
    <property type="nucleotide sequence ID" value="NM_001398336.1"/>
</dbReference>
<dbReference type="RefSeq" id="XP_016537481.1">
    <property type="nucleotide sequence ID" value="XM_016681995.1"/>
</dbReference>
<dbReference type="SMR" id="O65740"/>
<dbReference type="TCDB" id="1.C.45.1.5">
    <property type="family name" value="the plant defensin (plant defensin) family"/>
</dbReference>
<dbReference type="GeneID" id="107838795"/>
<dbReference type="OrthoDB" id="683455at2759"/>
<dbReference type="GO" id="GO:0005576">
    <property type="term" value="C:extracellular region"/>
    <property type="evidence" value="ECO:0007669"/>
    <property type="project" value="UniProtKB-SubCell"/>
</dbReference>
<dbReference type="GO" id="GO:0050832">
    <property type="term" value="P:defense response to fungus"/>
    <property type="evidence" value="ECO:0007669"/>
    <property type="project" value="UniProtKB-KW"/>
</dbReference>
<dbReference type="GO" id="GO:0031640">
    <property type="term" value="P:killing of cells of another organism"/>
    <property type="evidence" value="ECO:0007669"/>
    <property type="project" value="UniProtKB-KW"/>
</dbReference>
<dbReference type="CDD" id="cd00107">
    <property type="entry name" value="Knot1"/>
    <property type="match status" value="1"/>
</dbReference>
<dbReference type="Gene3D" id="3.30.30.10">
    <property type="entry name" value="Knottin, scorpion toxin-like"/>
    <property type="match status" value="1"/>
</dbReference>
<dbReference type="InterPro" id="IPR008176">
    <property type="entry name" value="Defensin_plant"/>
</dbReference>
<dbReference type="InterPro" id="IPR003614">
    <property type="entry name" value="Scorpion_toxin-like"/>
</dbReference>
<dbReference type="InterPro" id="IPR036574">
    <property type="entry name" value="Scorpion_toxin-like_sf"/>
</dbReference>
<dbReference type="PANTHER" id="PTHR33147:SF111">
    <property type="entry name" value="DEFENSIN-LIKE PROTEIN"/>
    <property type="match status" value="1"/>
</dbReference>
<dbReference type="PANTHER" id="PTHR33147">
    <property type="entry name" value="DEFENSIN-LIKE PROTEIN 1"/>
    <property type="match status" value="1"/>
</dbReference>
<dbReference type="Pfam" id="PF00304">
    <property type="entry name" value="Gamma-thionin"/>
    <property type="match status" value="1"/>
</dbReference>
<dbReference type="PRINTS" id="PR00288">
    <property type="entry name" value="PUROTHIONIN"/>
</dbReference>
<dbReference type="SMART" id="SM00505">
    <property type="entry name" value="Knot1"/>
    <property type="match status" value="1"/>
</dbReference>
<dbReference type="SUPFAM" id="SSF57095">
    <property type="entry name" value="Scorpion toxin-like"/>
    <property type="match status" value="1"/>
</dbReference>
<dbReference type="PROSITE" id="PS00940">
    <property type="entry name" value="GAMMA_THIONIN"/>
    <property type="match status" value="1"/>
</dbReference>
<sequence>MAGFSKVIATIFLMMMLVFATGMVAEARTCESQSHRFKGLCFSKSNCGSVCHTEGFNGGHCRGFRRRCFCTRHC</sequence>
<proteinExistence type="evidence at protein level"/>